<gene>
    <name type="primary">spoT</name>
    <name type="ordered locus">SF3690</name>
    <name type="ordered locus">S4079</name>
</gene>
<proteinExistence type="inferred from homology"/>
<feature type="chain" id="PRO_0000166574" description="Guanosine-3',5'-bis(diphosphate) 3'-pyrophosphohydrolase">
    <location>
        <begin position="1"/>
        <end position="702"/>
    </location>
</feature>
<feature type="domain" description="HD" evidence="3">
    <location>
        <begin position="45"/>
        <end position="144"/>
    </location>
</feature>
<feature type="domain" description="TGS" evidence="4">
    <location>
        <begin position="386"/>
        <end position="447"/>
    </location>
</feature>
<feature type="domain" description="ACT" evidence="2">
    <location>
        <begin position="628"/>
        <end position="702"/>
    </location>
</feature>
<name>SPOT_SHIFL</name>
<sequence length="702" mass="79342">MYLFESLNQLIQTYLPEDQIKRLRQAYLVARDAHEGQTRSSGEPYITHPVAVACILAEMKLDYETLMAALLHDVIEDTPATYQDMEQLFGKSVAELVEGVSKLDKLKFRDKKEAQAENFRKMIMAMVQDIRVILIKLADRTHNMRTLGSLRPDKRRRIARETLEIYSPLAHRLGIHHIKTELEELGFEALYPNRYRVIKEVVKAARGNRKEMIQKILSEIEGRLQEAGIPCRVSGREKHLYSIYCKMVLKEQRFHSIMDIYAFRVIVNDSDTCYRVLGQMHSLYKPRPGRVKDYIAIPKANGYQSLHTSMIGPHGVPVEVQIRTEDMDQMAEMGVAAHWAYKEHGETSTTAQIRAQRWMQSLLELQQSAGSSFEFIESVKSDLFPDEIYVFTPEGRIVELPAGATPVDFAYAVHTDIGHACVGARVDRQPYPLSQPLTSGQTVEIITAPGARPNAAWLNFVVSSKARAKIRQLLKNLKRDDSVSLGRRLLNHALGGSRKLNEIPQENIQRELDRMKLATLDDLLAEIGLGNAMSVVVAKNLQHGDASIPPATQSHGHLPIKGADGVLITFAKCCRPIPGDPIIAHVSPGKGLVIHHESCRNIRGYQKEPEKFMAVEWDKETAQEFITEIKVEMFNHQGALANLTAAINTTTSNIQSLNTEEKDGRVYSAFIRLTARDRVHLANIMRKIRVMPDVIKVTRNRN</sequence>
<organism>
    <name type="scientific">Shigella flexneri</name>
    <dbReference type="NCBI Taxonomy" id="623"/>
    <lineage>
        <taxon>Bacteria</taxon>
        <taxon>Pseudomonadati</taxon>
        <taxon>Pseudomonadota</taxon>
        <taxon>Gammaproteobacteria</taxon>
        <taxon>Enterobacterales</taxon>
        <taxon>Enterobacteriaceae</taxon>
        <taxon>Shigella</taxon>
    </lineage>
</organism>
<comment type="function">
    <text evidence="1">In eubacteria ppGpp (guanosine 3'-diphosphate 5'-diphosphate) is a mediator of the stringent response that coordinates a variety of cellular activities in response to changes in nutritional abundance. This enzyme catalyzes the degradation of ppGpp into GDP. It may also be capable of catalyzing the synthesis of ppGpp (By similarity).</text>
</comment>
<comment type="catalytic activity">
    <reaction>
        <text>guanosine 3',5'-bis(diphosphate) + H2O = GDP + diphosphate + H(+)</text>
        <dbReference type="Rhea" id="RHEA:14253"/>
        <dbReference type="ChEBI" id="CHEBI:15377"/>
        <dbReference type="ChEBI" id="CHEBI:15378"/>
        <dbReference type="ChEBI" id="CHEBI:33019"/>
        <dbReference type="ChEBI" id="CHEBI:58189"/>
        <dbReference type="ChEBI" id="CHEBI:77828"/>
        <dbReference type="EC" id="3.1.7.2"/>
    </reaction>
</comment>
<comment type="cofactor">
    <cofactor evidence="1">
        <name>Mn(2+)</name>
        <dbReference type="ChEBI" id="CHEBI:29035"/>
    </cofactor>
</comment>
<comment type="pathway">
    <text>Purine metabolism; ppGpp biosynthesis; ppGpp from GDP: step 1/1.</text>
</comment>
<comment type="similarity">
    <text evidence="5">Belongs to the RelA/SpoT family.</text>
</comment>
<protein>
    <recommendedName>
        <fullName>Guanosine-3',5'-bis(diphosphate) 3'-pyrophosphohydrolase</fullName>
        <ecNumber>3.1.7.2</ecNumber>
    </recommendedName>
    <alternativeName>
        <fullName>Penta-phosphate guanosine-3'-pyrophosphohydrolase</fullName>
        <shortName>(ppGpp)ase</shortName>
    </alternativeName>
</protein>
<keyword id="KW-0378">Hydrolase</keyword>
<keyword id="KW-0464">Manganese</keyword>
<keyword id="KW-1185">Reference proteome</keyword>
<accession>P0AG26</accession>
<accession>P17580</accession>
<evidence type="ECO:0000250" key="1"/>
<evidence type="ECO:0000255" key="2">
    <source>
        <dbReference type="PROSITE-ProRule" id="PRU01007"/>
    </source>
</evidence>
<evidence type="ECO:0000255" key="3">
    <source>
        <dbReference type="PROSITE-ProRule" id="PRU01175"/>
    </source>
</evidence>
<evidence type="ECO:0000255" key="4">
    <source>
        <dbReference type="PROSITE-ProRule" id="PRU01228"/>
    </source>
</evidence>
<evidence type="ECO:0000305" key="5"/>
<dbReference type="EC" id="3.1.7.2"/>
<dbReference type="EMBL" id="AE005674">
    <property type="protein sequence ID" value="AAN45137.1"/>
    <property type="molecule type" value="Genomic_DNA"/>
</dbReference>
<dbReference type="EMBL" id="AE014073">
    <property type="protein sequence ID" value="AAP19056.1"/>
    <property type="molecule type" value="Genomic_DNA"/>
</dbReference>
<dbReference type="RefSeq" id="NP_709430.1">
    <property type="nucleotide sequence ID" value="NC_004337.2"/>
</dbReference>
<dbReference type="RefSeq" id="WP_000280488.1">
    <property type="nucleotide sequence ID" value="NZ_WPGW01000042.1"/>
</dbReference>
<dbReference type="SMR" id="P0AG26"/>
<dbReference type="STRING" id="198214.SF3690"/>
<dbReference type="PaxDb" id="198214-SF3690"/>
<dbReference type="GeneID" id="1026895"/>
<dbReference type="GeneID" id="93778365"/>
<dbReference type="KEGG" id="sfl:SF3690"/>
<dbReference type="KEGG" id="sfx:S4079"/>
<dbReference type="PATRIC" id="fig|198214.7.peg.4354"/>
<dbReference type="HOGENOM" id="CLU_012300_3_0_6"/>
<dbReference type="UniPathway" id="UPA00908">
    <property type="reaction ID" value="UER00886"/>
</dbReference>
<dbReference type="Proteomes" id="UP000001006">
    <property type="component" value="Chromosome"/>
</dbReference>
<dbReference type="Proteomes" id="UP000002673">
    <property type="component" value="Chromosome"/>
</dbReference>
<dbReference type="GO" id="GO:0005886">
    <property type="term" value="C:plasma membrane"/>
    <property type="evidence" value="ECO:0007669"/>
    <property type="project" value="TreeGrafter"/>
</dbReference>
<dbReference type="GO" id="GO:0008728">
    <property type="term" value="F:GTP diphosphokinase activity"/>
    <property type="evidence" value="ECO:0007669"/>
    <property type="project" value="TreeGrafter"/>
</dbReference>
<dbReference type="GO" id="GO:0008893">
    <property type="term" value="F:guanosine-3',5'-bis(diphosphate) 3'-diphosphatase activity"/>
    <property type="evidence" value="ECO:0007669"/>
    <property type="project" value="UniProtKB-EC"/>
</dbReference>
<dbReference type="GO" id="GO:0015970">
    <property type="term" value="P:guanosine tetraphosphate biosynthetic process"/>
    <property type="evidence" value="ECO:0007669"/>
    <property type="project" value="UniProtKB-UniPathway"/>
</dbReference>
<dbReference type="GO" id="GO:0042594">
    <property type="term" value="P:response to starvation"/>
    <property type="evidence" value="ECO:0007669"/>
    <property type="project" value="TreeGrafter"/>
</dbReference>
<dbReference type="CDD" id="cd04876">
    <property type="entry name" value="ACT_RelA-SpoT"/>
    <property type="match status" value="1"/>
</dbReference>
<dbReference type="CDD" id="cd00077">
    <property type="entry name" value="HDc"/>
    <property type="match status" value="1"/>
</dbReference>
<dbReference type="CDD" id="cd05399">
    <property type="entry name" value="NT_Rel-Spo_like"/>
    <property type="match status" value="1"/>
</dbReference>
<dbReference type="CDD" id="cd01668">
    <property type="entry name" value="TGS_RSH"/>
    <property type="match status" value="1"/>
</dbReference>
<dbReference type="FunFam" id="3.30.70.260:FF:000006">
    <property type="entry name" value="(P)ppGpp synthase/hydrolase SpoT"/>
    <property type="match status" value="1"/>
</dbReference>
<dbReference type="FunFam" id="3.10.20.30:FF:000002">
    <property type="entry name" value="GTP pyrophosphokinase (RelA/SpoT)"/>
    <property type="match status" value="1"/>
</dbReference>
<dbReference type="FunFam" id="1.10.3210.10:FF:000001">
    <property type="entry name" value="GTP pyrophosphokinase RelA"/>
    <property type="match status" value="1"/>
</dbReference>
<dbReference type="FunFam" id="3.30.460.10:FF:000001">
    <property type="entry name" value="GTP pyrophosphokinase RelA"/>
    <property type="match status" value="1"/>
</dbReference>
<dbReference type="Gene3D" id="3.10.20.30">
    <property type="match status" value="1"/>
</dbReference>
<dbReference type="Gene3D" id="3.30.70.260">
    <property type="match status" value="1"/>
</dbReference>
<dbReference type="Gene3D" id="3.30.460.10">
    <property type="entry name" value="Beta Polymerase, domain 2"/>
    <property type="match status" value="1"/>
</dbReference>
<dbReference type="Gene3D" id="1.10.3210.10">
    <property type="entry name" value="Hypothetical protein af1432"/>
    <property type="match status" value="1"/>
</dbReference>
<dbReference type="InterPro" id="IPR045865">
    <property type="entry name" value="ACT-like_dom_sf"/>
</dbReference>
<dbReference type="InterPro" id="IPR002912">
    <property type="entry name" value="ACT_dom"/>
</dbReference>
<dbReference type="InterPro" id="IPR012675">
    <property type="entry name" value="Beta-grasp_dom_sf"/>
</dbReference>
<dbReference type="InterPro" id="IPR003607">
    <property type="entry name" value="HD/PDEase_dom"/>
</dbReference>
<dbReference type="InterPro" id="IPR006674">
    <property type="entry name" value="HD_domain"/>
</dbReference>
<dbReference type="InterPro" id="IPR043519">
    <property type="entry name" value="NT_sf"/>
</dbReference>
<dbReference type="InterPro" id="IPR004811">
    <property type="entry name" value="RelA/Spo_fam"/>
</dbReference>
<dbReference type="InterPro" id="IPR045600">
    <property type="entry name" value="RelA/SpoT_AH_RIS"/>
</dbReference>
<dbReference type="InterPro" id="IPR007685">
    <property type="entry name" value="RelA_SpoT"/>
</dbReference>
<dbReference type="InterPro" id="IPR004095">
    <property type="entry name" value="TGS"/>
</dbReference>
<dbReference type="InterPro" id="IPR012676">
    <property type="entry name" value="TGS-like"/>
</dbReference>
<dbReference type="InterPro" id="IPR033655">
    <property type="entry name" value="TGS_RelA/SpoT"/>
</dbReference>
<dbReference type="NCBIfam" id="NF008303">
    <property type="entry name" value="PRK11092.1"/>
    <property type="match status" value="1"/>
</dbReference>
<dbReference type="NCBIfam" id="TIGR00691">
    <property type="entry name" value="spoT_relA"/>
    <property type="match status" value="1"/>
</dbReference>
<dbReference type="PANTHER" id="PTHR21262:SF36">
    <property type="entry name" value="BIFUNCTIONAL (P)PPGPP SYNTHASE_HYDROLASE SPOT"/>
    <property type="match status" value="1"/>
</dbReference>
<dbReference type="PANTHER" id="PTHR21262">
    <property type="entry name" value="GUANOSINE-3',5'-BIS DIPHOSPHATE 3'-PYROPHOSPHOHYDROLASE"/>
    <property type="match status" value="1"/>
</dbReference>
<dbReference type="Pfam" id="PF13291">
    <property type="entry name" value="ACT_4"/>
    <property type="match status" value="1"/>
</dbReference>
<dbReference type="Pfam" id="PF13328">
    <property type="entry name" value="HD_4"/>
    <property type="match status" value="1"/>
</dbReference>
<dbReference type="Pfam" id="PF19296">
    <property type="entry name" value="RelA_AH_RIS"/>
    <property type="match status" value="1"/>
</dbReference>
<dbReference type="Pfam" id="PF04607">
    <property type="entry name" value="RelA_SpoT"/>
    <property type="match status" value="1"/>
</dbReference>
<dbReference type="Pfam" id="PF02824">
    <property type="entry name" value="TGS"/>
    <property type="match status" value="1"/>
</dbReference>
<dbReference type="SMART" id="SM00471">
    <property type="entry name" value="HDc"/>
    <property type="match status" value="1"/>
</dbReference>
<dbReference type="SMART" id="SM00954">
    <property type="entry name" value="RelA_SpoT"/>
    <property type="match status" value="1"/>
</dbReference>
<dbReference type="SUPFAM" id="SSF55021">
    <property type="entry name" value="ACT-like"/>
    <property type="match status" value="1"/>
</dbReference>
<dbReference type="SUPFAM" id="SSF109604">
    <property type="entry name" value="HD-domain/PDEase-like"/>
    <property type="match status" value="1"/>
</dbReference>
<dbReference type="SUPFAM" id="SSF81301">
    <property type="entry name" value="Nucleotidyltransferase"/>
    <property type="match status" value="1"/>
</dbReference>
<dbReference type="SUPFAM" id="SSF81271">
    <property type="entry name" value="TGS-like"/>
    <property type="match status" value="1"/>
</dbReference>
<dbReference type="PROSITE" id="PS51671">
    <property type="entry name" value="ACT"/>
    <property type="match status" value="1"/>
</dbReference>
<dbReference type="PROSITE" id="PS51831">
    <property type="entry name" value="HD"/>
    <property type="match status" value="1"/>
</dbReference>
<dbReference type="PROSITE" id="PS51880">
    <property type="entry name" value="TGS"/>
    <property type="match status" value="1"/>
</dbReference>
<reference key="1">
    <citation type="journal article" date="2002" name="Nucleic Acids Res.">
        <title>Genome sequence of Shigella flexneri 2a: insights into pathogenicity through comparison with genomes of Escherichia coli K12 and O157.</title>
        <authorList>
            <person name="Jin Q."/>
            <person name="Yuan Z."/>
            <person name="Xu J."/>
            <person name="Wang Y."/>
            <person name="Shen Y."/>
            <person name="Lu W."/>
            <person name="Wang J."/>
            <person name="Liu H."/>
            <person name="Yang J."/>
            <person name="Yang F."/>
            <person name="Zhang X."/>
            <person name="Zhang J."/>
            <person name="Yang G."/>
            <person name="Wu H."/>
            <person name="Qu D."/>
            <person name="Dong J."/>
            <person name="Sun L."/>
            <person name="Xue Y."/>
            <person name="Zhao A."/>
            <person name="Gao Y."/>
            <person name="Zhu J."/>
            <person name="Kan B."/>
            <person name="Ding K."/>
            <person name="Chen S."/>
            <person name="Cheng H."/>
            <person name="Yao Z."/>
            <person name="He B."/>
            <person name="Chen R."/>
            <person name="Ma D."/>
            <person name="Qiang B."/>
            <person name="Wen Y."/>
            <person name="Hou Y."/>
            <person name="Yu J."/>
        </authorList>
    </citation>
    <scope>NUCLEOTIDE SEQUENCE [LARGE SCALE GENOMIC DNA]</scope>
    <source>
        <strain>301 / Serotype 2a</strain>
    </source>
</reference>
<reference key="2">
    <citation type="journal article" date="2003" name="Infect. Immun.">
        <title>Complete genome sequence and comparative genomics of Shigella flexneri serotype 2a strain 2457T.</title>
        <authorList>
            <person name="Wei J."/>
            <person name="Goldberg M.B."/>
            <person name="Burland V."/>
            <person name="Venkatesan M.M."/>
            <person name="Deng W."/>
            <person name="Fournier G."/>
            <person name="Mayhew G.F."/>
            <person name="Plunkett G. III"/>
            <person name="Rose D.J."/>
            <person name="Darling A."/>
            <person name="Mau B."/>
            <person name="Perna N.T."/>
            <person name="Payne S.M."/>
            <person name="Runyen-Janecky L.J."/>
            <person name="Zhou S."/>
            <person name="Schwartz D.C."/>
            <person name="Blattner F.R."/>
        </authorList>
    </citation>
    <scope>NUCLEOTIDE SEQUENCE [LARGE SCALE GENOMIC DNA]</scope>
    <source>
        <strain>ATCC 700930 / 2457T / Serotype 2a</strain>
    </source>
</reference>